<gene>
    <name type="primary">RPL9</name>
    <name type="ordered locus">At3g44890</name>
    <name type="ORF">F28D10_80</name>
</gene>
<comment type="function">
    <text evidence="1">Binds to the 23S rRNA.</text>
</comment>
<comment type="subunit">
    <text evidence="1">Part of the 50S ribosomal subunit.</text>
</comment>
<comment type="subcellular location">
    <subcellularLocation>
        <location>Plastid</location>
        <location>Chloroplast</location>
    </subcellularLocation>
</comment>
<comment type="similarity">
    <text evidence="3">Belongs to the bacterial ribosomal protein bL9 family.</text>
</comment>
<feature type="transit peptide" description="Chloroplast" evidence="1">
    <location>
        <begin position="1"/>
        <end position="42"/>
    </location>
</feature>
<feature type="chain" id="PRO_0000030548" description="Large ribosomal subunit protein bL9c">
    <location>
        <begin position="43"/>
        <end position="197"/>
    </location>
</feature>
<accession>P25864</accession>
<dbReference type="EMBL" id="Z11129">
    <property type="protein sequence ID" value="CAA77480.1"/>
    <property type="molecule type" value="mRNA"/>
</dbReference>
<dbReference type="EMBL" id="Z11509">
    <property type="protein sequence ID" value="CAA77594.1"/>
    <property type="molecule type" value="Genomic_DNA"/>
</dbReference>
<dbReference type="EMBL" id="AL391254">
    <property type="protein sequence ID" value="CAC03539.1"/>
    <property type="molecule type" value="Genomic_DNA"/>
</dbReference>
<dbReference type="EMBL" id="CP002686">
    <property type="protein sequence ID" value="AEE77965.1"/>
    <property type="molecule type" value="Genomic_DNA"/>
</dbReference>
<dbReference type="EMBL" id="BT000914">
    <property type="protein sequence ID" value="AAN41314.1"/>
    <property type="molecule type" value="mRNA"/>
</dbReference>
<dbReference type="PIR" id="S20943">
    <property type="entry name" value="R5MUL9"/>
</dbReference>
<dbReference type="RefSeq" id="NP_190075.1">
    <property type="nucleotide sequence ID" value="NM_114358.4"/>
</dbReference>
<dbReference type="SMR" id="P25864"/>
<dbReference type="BioGRID" id="8943">
    <property type="interactions" value="6"/>
</dbReference>
<dbReference type="FunCoup" id="P25864">
    <property type="interactions" value="977"/>
</dbReference>
<dbReference type="STRING" id="3702.P25864"/>
<dbReference type="MetOSite" id="P25864"/>
<dbReference type="PaxDb" id="3702-AT3G44890.1"/>
<dbReference type="ProteomicsDB" id="226471"/>
<dbReference type="EnsemblPlants" id="AT3G44890.1">
    <property type="protein sequence ID" value="AT3G44890.1"/>
    <property type="gene ID" value="AT3G44890"/>
</dbReference>
<dbReference type="GeneID" id="823623"/>
<dbReference type="Gramene" id="AT3G44890.1">
    <property type="protein sequence ID" value="AT3G44890.1"/>
    <property type="gene ID" value="AT3G44890"/>
</dbReference>
<dbReference type="KEGG" id="ath:AT3G44890"/>
<dbReference type="Araport" id="AT3G44890"/>
<dbReference type="TAIR" id="AT3G44890">
    <property type="gene designation" value="RPL9"/>
</dbReference>
<dbReference type="eggNOG" id="KOG4607">
    <property type="taxonomic scope" value="Eukaryota"/>
</dbReference>
<dbReference type="HOGENOM" id="CLU_078938_5_0_1"/>
<dbReference type="InParanoid" id="P25864"/>
<dbReference type="OMA" id="FAIRWTK"/>
<dbReference type="OrthoDB" id="5555409at2759"/>
<dbReference type="PhylomeDB" id="P25864"/>
<dbReference type="PRO" id="PR:P25864"/>
<dbReference type="Proteomes" id="UP000006548">
    <property type="component" value="Chromosome 3"/>
</dbReference>
<dbReference type="ExpressionAtlas" id="P25864">
    <property type="expression patterns" value="baseline and differential"/>
</dbReference>
<dbReference type="GO" id="GO:0009507">
    <property type="term" value="C:chloroplast"/>
    <property type="evidence" value="ECO:0007005"/>
    <property type="project" value="TAIR"/>
</dbReference>
<dbReference type="GO" id="GO:0009941">
    <property type="term" value="C:chloroplast envelope"/>
    <property type="evidence" value="ECO:0007005"/>
    <property type="project" value="TAIR"/>
</dbReference>
<dbReference type="GO" id="GO:0009570">
    <property type="term" value="C:chloroplast stroma"/>
    <property type="evidence" value="ECO:0007005"/>
    <property type="project" value="TAIR"/>
</dbReference>
<dbReference type="GO" id="GO:0005829">
    <property type="term" value="C:cytosol"/>
    <property type="evidence" value="ECO:0007005"/>
    <property type="project" value="TAIR"/>
</dbReference>
<dbReference type="GO" id="GO:0000311">
    <property type="term" value="C:plastid large ribosomal subunit"/>
    <property type="evidence" value="ECO:0000304"/>
    <property type="project" value="TAIR"/>
</dbReference>
<dbReference type="GO" id="GO:0003729">
    <property type="term" value="F:mRNA binding"/>
    <property type="evidence" value="ECO:0000314"/>
    <property type="project" value="TAIR"/>
</dbReference>
<dbReference type="GO" id="GO:0019843">
    <property type="term" value="F:rRNA binding"/>
    <property type="evidence" value="ECO:0007669"/>
    <property type="project" value="UniProtKB-KW"/>
</dbReference>
<dbReference type="GO" id="GO:0003735">
    <property type="term" value="F:structural constituent of ribosome"/>
    <property type="evidence" value="ECO:0000250"/>
    <property type="project" value="TAIR"/>
</dbReference>
<dbReference type="GO" id="GO:0006412">
    <property type="term" value="P:translation"/>
    <property type="evidence" value="ECO:0000304"/>
    <property type="project" value="TAIR"/>
</dbReference>
<dbReference type="FunFam" id="3.10.430.100:FF:000005">
    <property type="entry name" value="50S ribosomal protein L9"/>
    <property type="match status" value="1"/>
</dbReference>
<dbReference type="FunFam" id="3.40.5.10:FF:000006">
    <property type="entry name" value="50S ribosomal protein L9, chloroplastic"/>
    <property type="match status" value="1"/>
</dbReference>
<dbReference type="Gene3D" id="3.10.430.100">
    <property type="entry name" value="Ribosomal protein L9, C-terminal domain"/>
    <property type="match status" value="1"/>
</dbReference>
<dbReference type="Gene3D" id="3.40.5.10">
    <property type="entry name" value="Ribosomal protein L9, N-terminal domain"/>
    <property type="match status" value="1"/>
</dbReference>
<dbReference type="HAMAP" id="MF_00503">
    <property type="entry name" value="Ribosomal_bL9"/>
    <property type="match status" value="1"/>
</dbReference>
<dbReference type="InterPro" id="IPR000244">
    <property type="entry name" value="Ribosomal_bL9"/>
</dbReference>
<dbReference type="InterPro" id="IPR009027">
    <property type="entry name" value="Ribosomal_bL9/RNase_H1_N"/>
</dbReference>
<dbReference type="InterPro" id="IPR020594">
    <property type="entry name" value="Ribosomal_bL9_bac/chp"/>
</dbReference>
<dbReference type="InterPro" id="IPR020069">
    <property type="entry name" value="Ribosomal_bL9_C"/>
</dbReference>
<dbReference type="InterPro" id="IPR036791">
    <property type="entry name" value="Ribosomal_bL9_C_sf"/>
</dbReference>
<dbReference type="InterPro" id="IPR020070">
    <property type="entry name" value="Ribosomal_bL9_N"/>
</dbReference>
<dbReference type="InterPro" id="IPR036935">
    <property type="entry name" value="Ribosomal_bL9_N_sf"/>
</dbReference>
<dbReference type="NCBIfam" id="TIGR00158">
    <property type="entry name" value="L9"/>
    <property type="match status" value="1"/>
</dbReference>
<dbReference type="PANTHER" id="PTHR21368">
    <property type="entry name" value="50S RIBOSOMAL PROTEIN L9"/>
    <property type="match status" value="1"/>
</dbReference>
<dbReference type="Pfam" id="PF03948">
    <property type="entry name" value="Ribosomal_L9_C"/>
    <property type="match status" value="1"/>
</dbReference>
<dbReference type="Pfam" id="PF01281">
    <property type="entry name" value="Ribosomal_L9_N"/>
    <property type="match status" value="1"/>
</dbReference>
<dbReference type="SUPFAM" id="SSF55658">
    <property type="entry name" value="L9 N-domain-like"/>
    <property type="match status" value="1"/>
</dbReference>
<dbReference type="SUPFAM" id="SSF55653">
    <property type="entry name" value="Ribosomal protein L9 C-domain"/>
    <property type="match status" value="1"/>
</dbReference>
<dbReference type="PROSITE" id="PS00651">
    <property type="entry name" value="RIBOSOMAL_L9"/>
    <property type="match status" value="1"/>
</dbReference>
<evidence type="ECO:0000250" key="1"/>
<evidence type="ECO:0000303" key="2">
    <source>
    </source>
</evidence>
<evidence type="ECO:0000305" key="3"/>
<name>RK9_ARATH</name>
<protein>
    <recommendedName>
        <fullName evidence="2">Large ribosomal subunit protein bL9c</fullName>
    </recommendedName>
    <alternativeName>
        <fullName>50S ribosomal protein L9, chloroplastic</fullName>
    </alternativeName>
    <alternativeName>
        <fullName>CL9</fullName>
    </alternativeName>
</protein>
<organism>
    <name type="scientific">Arabidopsis thaliana</name>
    <name type="common">Mouse-ear cress</name>
    <dbReference type="NCBI Taxonomy" id="3702"/>
    <lineage>
        <taxon>Eukaryota</taxon>
        <taxon>Viridiplantae</taxon>
        <taxon>Streptophyta</taxon>
        <taxon>Embryophyta</taxon>
        <taxon>Tracheophyta</taxon>
        <taxon>Spermatophyta</taxon>
        <taxon>Magnoliopsida</taxon>
        <taxon>eudicotyledons</taxon>
        <taxon>Gunneridae</taxon>
        <taxon>Pentapetalae</taxon>
        <taxon>rosids</taxon>
        <taxon>malvids</taxon>
        <taxon>Brassicales</taxon>
        <taxon>Brassicaceae</taxon>
        <taxon>Camelineae</taxon>
        <taxon>Arabidopsis</taxon>
    </lineage>
</organism>
<sequence>MASSTALSLSWSSSPCWSHSFNGGANETLKVSERRFNFEVVSQKKAKKLRKVILKEDVTDLGKQGQLLDVKAGFFRNFLLPTGKAQLMTPLLLKELKMEDERIEAEKQRVKEEAQQLAMVFQTVGAFKVKRKGGKGKLIFGSVTAQDLVDIIKSQLQKDIDKRLVSLPEIRETGEYIAELKLHPDVTARVKINVFAN</sequence>
<keyword id="KW-0150">Chloroplast</keyword>
<keyword id="KW-0934">Plastid</keyword>
<keyword id="KW-1185">Reference proteome</keyword>
<keyword id="KW-0687">Ribonucleoprotein</keyword>
<keyword id="KW-0689">Ribosomal protein</keyword>
<keyword id="KW-0694">RNA-binding</keyword>
<keyword id="KW-0699">rRNA-binding</keyword>
<keyword id="KW-0809">Transit peptide</keyword>
<proteinExistence type="evidence at transcript level"/>
<reference key="1">
    <citation type="journal article" date="1992" name="Plant Mol. Biol.">
        <title>Characterization of rps17, rp19 and rpl15: three nucleus-encoded plastid ribosomal protein genes.</title>
        <authorList>
            <person name="Thompson M.D."/>
            <person name="Jacks C.M."/>
            <person name="Lenvik T.R."/>
            <person name="Gantt J.S."/>
        </authorList>
    </citation>
    <scope>NUCLEOTIDE SEQUENCE [GENOMIC DNA / MRNA]</scope>
    <source>
        <strain>cv. Columbia</strain>
    </source>
</reference>
<reference key="2">
    <citation type="journal article" date="2000" name="Nature">
        <title>Sequence and analysis of chromosome 3 of the plant Arabidopsis thaliana.</title>
        <authorList>
            <person name="Salanoubat M."/>
            <person name="Lemcke K."/>
            <person name="Rieger M."/>
            <person name="Ansorge W."/>
            <person name="Unseld M."/>
            <person name="Fartmann B."/>
            <person name="Valle G."/>
            <person name="Bloecker H."/>
            <person name="Perez-Alonso M."/>
            <person name="Obermaier B."/>
            <person name="Delseny M."/>
            <person name="Boutry M."/>
            <person name="Grivell L.A."/>
            <person name="Mache R."/>
            <person name="Puigdomenech P."/>
            <person name="De Simone V."/>
            <person name="Choisne N."/>
            <person name="Artiguenave F."/>
            <person name="Robert C."/>
            <person name="Brottier P."/>
            <person name="Wincker P."/>
            <person name="Cattolico L."/>
            <person name="Weissenbach J."/>
            <person name="Saurin W."/>
            <person name="Quetier F."/>
            <person name="Schaefer M."/>
            <person name="Mueller-Auer S."/>
            <person name="Gabel C."/>
            <person name="Fuchs M."/>
            <person name="Benes V."/>
            <person name="Wurmbach E."/>
            <person name="Drzonek H."/>
            <person name="Erfle H."/>
            <person name="Jordan N."/>
            <person name="Bangert S."/>
            <person name="Wiedelmann R."/>
            <person name="Kranz H."/>
            <person name="Voss H."/>
            <person name="Holland R."/>
            <person name="Brandt P."/>
            <person name="Nyakatura G."/>
            <person name="Vezzi A."/>
            <person name="D'Angelo M."/>
            <person name="Pallavicini A."/>
            <person name="Toppo S."/>
            <person name="Simionati B."/>
            <person name="Conrad A."/>
            <person name="Hornischer K."/>
            <person name="Kauer G."/>
            <person name="Loehnert T.-H."/>
            <person name="Nordsiek G."/>
            <person name="Reichelt J."/>
            <person name="Scharfe M."/>
            <person name="Schoen O."/>
            <person name="Bargues M."/>
            <person name="Terol J."/>
            <person name="Climent J."/>
            <person name="Navarro P."/>
            <person name="Collado C."/>
            <person name="Perez-Perez A."/>
            <person name="Ottenwaelder B."/>
            <person name="Duchemin D."/>
            <person name="Cooke R."/>
            <person name="Laudie M."/>
            <person name="Berger-Llauro C."/>
            <person name="Purnelle B."/>
            <person name="Masuy D."/>
            <person name="de Haan M."/>
            <person name="Maarse A.C."/>
            <person name="Alcaraz J.-P."/>
            <person name="Cottet A."/>
            <person name="Casacuberta E."/>
            <person name="Monfort A."/>
            <person name="Argiriou A."/>
            <person name="Flores M."/>
            <person name="Liguori R."/>
            <person name="Vitale D."/>
            <person name="Mannhaupt G."/>
            <person name="Haase D."/>
            <person name="Schoof H."/>
            <person name="Rudd S."/>
            <person name="Zaccaria P."/>
            <person name="Mewes H.-W."/>
            <person name="Mayer K.F.X."/>
            <person name="Kaul S."/>
            <person name="Town C.D."/>
            <person name="Koo H.L."/>
            <person name="Tallon L.J."/>
            <person name="Jenkins J."/>
            <person name="Rooney T."/>
            <person name="Rizzo M."/>
            <person name="Walts A."/>
            <person name="Utterback T."/>
            <person name="Fujii C.Y."/>
            <person name="Shea T.P."/>
            <person name="Creasy T.H."/>
            <person name="Haas B."/>
            <person name="Maiti R."/>
            <person name="Wu D."/>
            <person name="Peterson J."/>
            <person name="Van Aken S."/>
            <person name="Pai G."/>
            <person name="Militscher J."/>
            <person name="Sellers P."/>
            <person name="Gill J.E."/>
            <person name="Feldblyum T.V."/>
            <person name="Preuss D."/>
            <person name="Lin X."/>
            <person name="Nierman W.C."/>
            <person name="Salzberg S.L."/>
            <person name="White O."/>
            <person name="Venter J.C."/>
            <person name="Fraser C.M."/>
            <person name="Kaneko T."/>
            <person name="Nakamura Y."/>
            <person name="Sato S."/>
            <person name="Kato T."/>
            <person name="Asamizu E."/>
            <person name="Sasamoto S."/>
            <person name="Kimura T."/>
            <person name="Idesawa K."/>
            <person name="Kawashima K."/>
            <person name="Kishida Y."/>
            <person name="Kiyokawa C."/>
            <person name="Kohara M."/>
            <person name="Matsumoto M."/>
            <person name="Matsuno A."/>
            <person name="Muraki A."/>
            <person name="Nakayama S."/>
            <person name="Nakazaki N."/>
            <person name="Shinpo S."/>
            <person name="Takeuchi C."/>
            <person name="Wada T."/>
            <person name="Watanabe A."/>
            <person name="Yamada M."/>
            <person name="Yasuda M."/>
            <person name="Tabata S."/>
        </authorList>
    </citation>
    <scope>NUCLEOTIDE SEQUENCE [LARGE SCALE GENOMIC DNA]</scope>
    <source>
        <strain>cv. Columbia</strain>
    </source>
</reference>
<reference key="3">
    <citation type="journal article" date="2017" name="Plant J.">
        <title>Araport11: a complete reannotation of the Arabidopsis thaliana reference genome.</title>
        <authorList>
            <person name="Cheng C.Y."/>
            <person name="Krishnakumar V."/>
            <person name="Chan A.P."/>
            <person name="Thibaud-Nissen F."/>
            <person name="Schobel S."/>
            <person name="Town C.D."/>
        </authorList>
    </citation>
    <scope>GENOME REANNOTATION</scope>
    <source>
        <strain>cv. Columbia</strain>
    </source>
</reference>
<reference key="4">
    <citation type="journal article" date="2003" name="Science">
        <title>Empirical analysis of transcriptional activity in the Arabidopsis genome.</title>
        <authorList>
            <person name="Yamada K."/>
            <person name="Lim J."/>
            <person name="Dale J.M."/>
            <person name="Chen H."/>
            <person name="Shinn P."/>
            <person name="Palm C.J."/>
            <person name="Southwick A.M."/>
            <person name="Wu H.C."/>
            <person name="Kim C.J."/>
            <person name="Nguyen M."/>
            <person name="Pham P.K."/>
            <person name="Cheuk R.F."/>
            <person name="Karlin-Newmann G."/>
            <person name="Liu S.X."/>
            <person name="Lam B."/>
            <person name="Sakano H."/>
            <person name="Wu T."/>
            <person name="Yu G."/>
            <person name="Miranda M."/>
            <person name="Quach H.L."/>
            <person name="Tripp M."/>
            <person name="Chang C.H."/>
            <person name="Lee J.M."/>
            <person name="Toriumi M.J."/>
            <person name="Chan M.M."/>
            <person name="Tang C.C."/>
            <person name="Onodera C.S."/>
            <person name="Deng J.M."/>
            <person name="Akiyama K."/>
            <person name="Ansari Y."/>
            <person name="Arakawa T."/>
            <person name="Banh J."/>
            <person name="Banno F."/>
            <person name="Bowser L."/>
            <person name="Brooks S.Y."/>
            <person name="Carninci P."/>
            <person name="Chao Q."/>
            <person name="Choy N."/>
            <person name="Enju A."/>
            <person name="Goldsmith A.D."/>
            <person name="Gurjal M."/>
            <person name="Hansen N.F."/>
            <person name="Hayashizaki Y."/>
            <person name="Johnson-Hopson C."/>
            <person name="Hsuan V.W."/>
            <person name="Iida K."/>
            <person name="Karnes M."/>
            <person name="Khan S."/>
            <person name="Koesema E."/>
            <person name="Ishida J."/>
            <person name="Jiang P.X."/>
            <person name="Jones T."/>
            <person name="Kawai J."/>
            <person name="Kamiya A."/>
            <person name="Meyers C."/>
            <person name="Nakajima M."/>
            <person name="Narusaka M."/>
            <person name="Seki M."/>
            <person name="Sakurai T."/>
            <person name="Satou M."/>
            <person name="Tamse R."/>
            <person name="Vaysberg M."/>
            <person name="Wallender E.K."/>
            <person name="Wong C."/>
            <person name="Yamamura Y."/>
            <person name="Yuan S."/>
            <person name="Shinozaki K."/>
            <person name="Davis R.W."/>
            <person name="Theologis A."/>
            <person name="Ecker J.R."/>
        </authorList>
    </citation>
    <scope>NUCLEOTIDE SEQUENCE [LARGE SCALE MRNA]</scope>
    <source>
        <strain>cv. Columbia</strain>
    </source>
</reference>
<reference key="5">
    <citation type="journal article" date="2023" name="Plant Cell">
        <title>An updated nomenclature for plant ribosomal protein genes.</title>
        <authorList>
            <person name="Scarpin M.R."/>
            <person name="Busche M."/>
            <person name="Martinez R.E."/>
            <person name="Harper L.C."/>
            <person name="Reiser L."/>
            <person name="Szakonyi D."/>
            <person name="Merchante C."/>
            <person name="Lan T."/>
            <person name="Xiong W."/>
            <person name="Mo B."/>
            <person name="Tang G."/>
            <person name="Chen X."/>
            <person name="Bailey-Serres J."/>
            <person name="Browning K.S."/>
            <person name="Brunkard J.O."/>
        </authorList>
    </citation>
    <scope>NOMENCLATURE</scope>
</reference>